<proteinExistence type="inferred from homology"/>
<feature type="chain" id="PRO_0000039455" description="Capsid protein VP1">
    <location>
        <begin position="1"/>
        <end position="810"/>
    </location>
</feature>
<feature type="region of interest" description="Disordered" evidence="2">
    <location>
        <begin position="316"/>
        <end position="366"/>
    </location>
</feature>
<feature type="region of interest" description="Disordered" evidence="2">
    <location>
        <begin position="373"/>
        <end position="392"/>
    </location>
</feature>
<feature type="compositionally biased region" description="Polar residues" evidence="2">
    <location>
        <begin position="348"/>
        <end position="366"/>
    </location>
</feature>
<feature type="compositionally biased region" description="Gly residues" evidence="2">
    <location>
        <begin position="379"/>
        <end position="390"/>
    </location>
</feature>
<feature type="splice variant" id="VSP_018955" description="In isoform VP4." evidence="3">
    <location>
        <begin position="1"/>
        <end position="373"/>
    </location>
</feature>
<feature type="splice variant" id="VSP_018954" description="In isoform VP3." evidence="3">
    <location>
        <begin position="1"/>
        <end position="322"/>
    </location>
</feature>
<feature type="splice variant" id="VSP_018953" description="In isoform VP2." evidence="3">
    <location>
        <begin position="1"/>
        <end position="277"/>
    </location>
</feature>
<protein>
    <recommendedName>
        <fullName>Capsid protein VP1</fullName>
    </recommendedName>
    <alternativeName>
        <fullName>Coat protein VP1</fullName>
    </alternativeName>
    <alternativeName>
        <fullName>Structural protein VP1</fullName>
    </alternativeName>
</protein>
<evidence type="ECO:0000250" key="1"/>
<evidence type="ECO:0000256" key="2">
    <source>
        <dbReference type="SAM" id="MobiDB-lite"/>
    </source>
</evidence>
<evidence type="ECO:0000305" key="3"/>
<comment type="function">
    <text evidence="1">Capsid protein self-assembles to form an icosahedral capsid with a T=1 symmetry, about 22 nm in diameter, and consisting of 60 copies of size variants of the capsid protein which differ in the N-terminus. The capsid encapsulates the genomic ssDNA. Capsid proteins are responsible for the attachment to host cell receptors. This attachment induces virion internalization predominantly through clathrin-dependent endocytosis (By similarity).</text>
</comment>
<comment type="subcellular location">
    <subcellularLocation>
        <location evidence="3">Virion</location>
    </subcellularLocation>
</comment>
<comment type="alternative products">
    <event type="alternative initiation"/>
    <isoform>
        <id>Q90053-1</id>
        <name>VP1</name>
        <sequence type="displayed"/>
    </isoform>
    <isoform>
        <id>Q90053-2</id>
        <name>VP2</name>
        <sequence type="described" ref="VSP_018953"/>
    </isoform>
    <isoform>
        <id>Q90053-3</id>
        <name>VP3</name>
        <sequence type="described" ref="VSP_018954"/>
    </isoform>
    <isoform>
        <id>Q90053-4</id>
        <name>VP4</name>
        <sequence type="described" ref="VSP_018955"/>
    </isoform>
</comment>
<name>CAPSD_JDNVP</name>
<gene>
    <name type="primary">VP</name>
</gene>
<organism>
    <name type="scientific">Junonia coenia densovirus (isolate pBRJ/1990)</name>
    <name type="common">JcDNV</name>
    <dbReference type="NCBI Taxonomy" id="648250"/>
    <lineage>
        <taxon>Viruses</taxon>
        <taxon>Monodnaviria</taxon>
        <taxon>Shotokuvirae</taxon>
        <taxon>Cossaviricota</taxon>
        <taxon>Quintoviricetes</taxon>
        <taxon>Piccovirales</taxon>
        <taxon>Parvoviridae</taxon>
        <taxon>Densovirinae</taxon>
        <taxon>Ambidensovirus</taxon>
        <taxon>Lepidopteran ambidensovirus 1</taxon>
    </lineage>
</organism>
<sequence length="810" mass="87896">MSFYTAGLIHRARPGYRIIPESTATEDIELGAIGEETPLLSEGAVTAVEESAAVGLPELGAGLAGAIGTHADVLYRNRNVFKSVLTGNYTDLKGNPLKQRNAISEKTKQLGRGIFQGDFNRAFPDDLKLETEQEKKDLLRYYNHNRRLAGLSEAYPQGKGYAYAKSQKVLEAERRGLTVPGYKYLGPGNSLNRGQPTNQIDEDAKEHDEAYDKAKTSQEVSQADNTFVNKALDHIVNAINLKETPGNAFGAAIGAIGIGTKQAIEKHSGVIYPSVSGMSRQINSKYLNSWHDWIEQNKHNNFEGIQLPEDFYTEEQTLSDSPMSEGTKRKADTPVEEGPSKKGAHNAPHNSQGTDPQNPSSSGATTSXDVEMAMSLPGTGSGTSSGGGNTSGQEVYVIPRPFSNFGKKLSTYTKSHKFMIFGLANNVIGPTGTGTTAVNRLITTCLAEIPWQKLPLYMNQSEFDLLPPGSRVVECNVKVIFRTNRIAFETSSTATKQATLNQISNLQTAVGLNKLGWGIDRSFTAFQSDQPMIPTATSAPKYEPITGTTGYRGMIADYYGADSTNDAAFGNAGNYPHHQVGSFTFIQNYYCMYQQTNQGTGGWPCLAEHLQQFDSKTVNNQCLIDVTYKPKMGLIKPPLNYKIIGQPTAKGTISVGDNLVNMRGAVVINPPEATQSVTESTHNLTRNFPANLFNIYSDIEKSQILHKGPWGHENPQIQPSVHIGIQAVPALTTGALLVNSSPLNSWTDSMGYIDVMSSCTVMESQPTHFPFSTDANTNPGNTIYRINLTPNSLTSAFNGLYGNGATLGNV</sequence>
<dbReference type="EMBL" id="S47266">
    <property type="protein sequence ID" value="AAB23698.1"/>
    <property type="molecule type" value="Genomic_DNA"/>
</dbReference>
<dbReference type="PIR" id="A44054">
    <property type="entry name" value="A44054"/>
</dbReference>
<dbReference type="KEGG" id="vg:955412"/>
<dbReference type="Proteomes" id="UP000008294">
    <property type="component" value="Segment"/>
</dbReference>
<dbReference type="GO" id="GO:0039615">
    <property type="term" value="C:T=1 icosahedral viral capsid"/>
    <property type="evidence" value="ECO:0007669"/>
    <property type="project" value="UniProtKB-KW"/>
</dbReference>
<dbReference type="GO" id="GO:0005198">
    <property type="term" value="F:structural molecule activity"/>
    <property type="evidence" value="ECO:0007669"/>
    <property type="project" value="InterPro"/>
</dbReference>
<dbReference type="GO" id="GO:0075512">
    <property type="term" value="P:clathrin-dependent endocytosis of virus by host cell"/>
    <property type="evidence" value="ECO:0007669"/>
    <property type="project" value="UniProtKB-KW"/>
</dbReference>
<dbReference type="GO" id="GO:0140267">
    <property type="term" value="P:symbiont entry into host cell via permeabilization of host membrane"/>
    <property type="evidence" value="ECO:0007669"/>
    <property type="project" value="UniProtKB-KW"/>
</dbReference>
<dbReference type="GO" id="GO:0019062">
    <property type="term" value="P:virion attachment to host cell"/>
    <property type="evidence" value="ECO:0007669"/>
    <property type="project" value="UniProtKB-KW"/>
</dbReference>
<dbReference type="InterPro" id="IPR016184">
    <property type="entry name" value="Capsid/spike_ssDNA_virus"/>
</dbReference>
<dbReference type="InterPro" id="IPR003433">
    <property type="entry name" value="Capsid_VP4_densovirus"/>
</dbReference>
<dbReference type="InterPro" id="IPR013607">
    <property type="entry name" value="Phospholipase_A2-like"/>
</dbReference>
<dbReference type="Pfam" id="PF02336">
    <property type="entry name" value="Denso_VP4"/>
    <property type="match status" value="1"/>
</dbReference>
<dbReference type="Pfam" id="PF08398">
    <property type="entry name" value="Phospholip_A2_4"/>
    <property type="match status" value="1"/>
</dbReference>
<dbReference type="SUPFAM" id="SSF88645">
    <property type="entry name" value="ssDNA viruses"/>
    <property type="match status" value="1"/>
</dbReference>
<reference key="1">
    <citation type="journal article" date="1992" name="Virology">
        <title>Complete nucleotide sequence of the cloned infectious genome of Junonia coenia densovirus reveals an organization unique among parvoviruses.</title>
        <authorList>
            <person name="Dumas B."/>
            <person name="Jourdan M."/>
            <person name="Pascaud A.M."/>
            <person name="Bergoin M."/>
        </authorList>
    </citation>
    <scope>NUCLEOTIDE SEQUENCE [GENOMIC DNA]</scope>
</reference>
<keyword id="KW-0024">Alternative initiation</keyword>
<keyword id="KW-0167">Capsid protein</keyword>
<keyword id="KW-1165">Clathrin-mediated endocytosis of virus by host</keyword>
<keyword id="KW-0945">Host-virus interaction</keyword>
<keyword id="KW-1185">Reference proteome</keyword>
<keyword id="KW-1140">T=1 icosahedral capsid protein</keyword>
<keyword id="KW-1161">Viral attachment to host cell</keyword>
<keyword id="KW-1162">Viral penetration into host cytoplasm</keyword>
<keyword id="KW-1173">Viral penetration via permeabilization of host membrane</keyword>
<keyword id="KW-0946">Virion</keyword>
<keyword id="KW-1164">Virus endocytosis by host</keyword>
<keyword id="KW-1160">Virus entry into host cell</keyword>
<accession>Q90053</accession>
<organismHost>
    <name type="scientific">Lepidoptera</name>
    <name type="common">butterflies and moths</name>
    <dbReference type="NCBI Taxonomy" id="7088"/>
</organismHost>